<reference key="1">
    <citation type="journal article" date="2006" name="Genome Res.">
        <title>Massive genome erosion and functional adaptations provide insights into the symbiotic lifestyle of Sodalis glossinidius in the tsetse host.</title>
        <authorList>
            <person name="Toh H."/>
            <person name="Weiss B.L."/>
            <person name="Perkin S.A.H."/>
            <person name="Yamashita A."/>
            <person name="Oshima K."/>
            <person name="Hattori M."/>
            <person name="Aksoy S."/>
        </authorList>
    </citation>
    <scope>NUCLEOTIDE SEQUENCE [LARGE SCALE GENOMIC DNA]</scope>
    <source>
        <strain>morsitans</strain>
    </source>
</reference>
<proteinExistence type="inferred from homology"/>
<evidence type="ECO:0000255" key="1">
    <source>
        <dbReference type="HAMAP-Rule" id="MF_00212"/>
    </source>
</evidence>
<accession>Q2NS49</accession>
<sequence>MKENFIAALGMTVSASAKQHQVVDNPPVDIILIGGGVMSATLGTYLKALEPGWTIHMYERLEKTAEESSNGWNNAGTGHAAFCELNYTTLSPAGSVDISKAVAVNESFEISRQFWAYLVKQKILTNPQSFINNVPHMSFVWGEDNIRFLRQRFDALQTSTLFRGMEYSENPQQIREWAPLVMDGRDTFQKVAATRMAMGTDVNFGEMTQQLLAALQQYPQFHLHLQHDVVDIKRNADQTWSVRVADHSNGGRQSTVCARHVFIGGGGASLTLLQKSGIPEVNGYAGFPVGGQFLVATNPEVVGHHHAKVYGKASVGAPPMSVPHIDTRILDGKQALLFGPFATFSSKFLKRGSWLDLFHSLTRQNLLPMLRVGLDNFGLMRYLIGQLLMSDKDRLNALREYYPQATMADWSLIEAGQRVQVIKKDAGKGGILQFGTEVVSSADGSLSVLLGASPGASTAAPIMLELLASMFKEQVTTDAWQRKLKEMVPSYGQTINGNLALTNEIRLSTSEVLGLTYIEAKPLPGEPADGKWEGLQKAM</sequence>
<keyword id="KW-0274">FAD</keyword>
<keyword id="KW-0285">Flavoprotein</keyword>
<keyword id="KW-0560">Oxidoreductase</keyword>
<keyword id="KW-0816">Tricarboxylic acid cycle</keyword>
<protein>
    <recommendedName>
        <fullName evidence="1">Probable malate:quinone oxidoreductase</fullName>
        <ecNumber evidence="1">1.1.5.4</ecNumber>
    </recommendedName>
    <alternativeName>
        <fullName evidence="1">MQO</fullName>
    </alternativeName>
    <alternativeName>
        <fullName evidence="1">Malate dehydrogenase [quinone]</fullName>
    </alternativeName>
</protein>
<organism>
    <name type="scientific">Sodalis glossinidius (strain morsitans)</name>
    <dbReference type="NCBI Taxonomy" id="343509"/>
    <lineage>
        <taxon>Bacteria</taxon>
        <taxon>Pseudomonadati</taxon>
        <taxon>Pseudomonadota</taxon>
        <taxon>Gammaproteobacteria</taxon>
        <taxon>Enterobacterales</taxon>
        <taxon>Bruguierivoracaceae</taxon>
        <taxon>Sodalis</taxon>
    </lineage>
</organism>
<comment type="catalytic activity">
    <reaction evidence="1">
        <text>(S)-malate + a quinone = a quinol + oxaloacetate</text>
        <dbReference type="Rhea" id="RHEA:46012"/>
        <dbReference type="ChEBI" id="CHEBI:15589"/>
        <dbReference type="ChEBI" id="CHEBI:16452"/>
        <dbReference type="ChEBI" id="CHEBI:24646"/>
        <dbReference type="ChEBI" id="CHEBI:132124"/>
        <dbReference type="EC" id="1.1.5.4"/>
    </reaction>
</comment>
<comment type="cofactor">
    <cofactor evidence="1">
        <name>FAD</name>
        <dbReference type="ChEBI" id="CHEBI:57692"/>
    </cofactor>
</comment>
<comment type="pathway">
    <text evidence="1">Carbohydrate metabolism; tricarboxylic acid cycle; oxaloacetate from (S)-malate (quinone route): step 1/1.</text>
</comment>
<comment type="similarity">
    <text evidence="1">Belongs to the MQO family.</text>
</comment>
<name>MQO_SODGM</name>
<feature type="chain" id="PRO_0000325513" description="Probable malate:quinone oxidoreductase">
    <location>
        <begin position="1"/>
        <end position="539"/>
    </location>
</feature>
<gene>
    <name evidence="1" type="primary">mqo</name>
    <name type="ordered locus">SG1751</name>
</gene>
<dbReference type="EC" id="1.1.5.4" evidence="1"/>
<dbReference type="EMBL" id="AP008232">
    <property type="protein sequence ID" value="BAE75026.1"/>
    <property type="molecule type" value="Genomic_DNA"/>
</dbReference>
<dbReference type="SMR" id="Q2NS49"/>
<dbReference type="STRING" id="343509.SG1751"/>
<dbReference type="KEGG" id="sgl:SG1751"/>
<dbReference type="eggNOG" id="COG0579">
    <property type="taxonomic scope" value="Bacteria"/>
</dbReference>
<dbReference type="HOGENOM" id="CLU_028151_0_0_6"/>
<dbReference type="OrthoDB" id="9763983at2"/>
<dbReference type="BioCyc" id="SGLO343509:SGP1_RS15950-MONOMER"/>
<dbReference type="UniPathway" id="UPA00223">
    <property type="reaction ID" value="UER01008"/>
</dbReference>
<dbReference type="Proteomes" id="UP000001932">
    <property type="component" value="Chromosome"/>
</dbReference>
<dbReference type="GO" id="GO:0047545">
    <property type="term" value="F:2-hydroxyglutarate dehydrogenase activity"/>
    <property type="evidence" value="ECO:0007669"/>
    <property type="project" value="TreeGrafter"/>
</dbReference>
<dbReference type="GO" id="GO:0008924">
    <property type="term" value="F:L-malate dehydrogenase (quinone) activity"/>
    <property type="evidence" value="ECO:0007669"/>
    <property type="project" value="UniProtKB-UniRule"/>
</dbReference>
<dbReference type="GO" id="GO:0006099">
    <property type="term" value="P:tricarboxylic acid cycle"/>
    <property type="evidence" value="ECO:0007669"/>
    <property type="project" value="UniProtKB-UniRule"/>
</dbReference>
<dbReference type="HAMAP" id="MF_00212">
    <property type="entry name" value="MQO"/>
    <property type="match status" value="1"/>
</dbReference>
<dbReference type="InterPro" id="IPR036188">
    <property type="entry name" value="FAD/NAD-bd_sf"/>
</dbReference>
<dbReference type="InterPro" id="IPR006231">
    <property type="entry name" value="MQO"/>
</dbReference>
<dbReference type="NCBIfam" id="TIGR01320">
    <property type="entry name" value="mal_quin_oxido"/>
    <property type="match status" value="1"/>
</dbReference>
<dbReference type="NCBIfam" id="NF003603">
    <property type="entry name" value="PRK05257.1-1"/>
    <property type="match status" value="1"/>
</dbReference>
<dbReference type="NCBIfam" id="NF003605">
    <property type="entry name" value="PRK05257.1-4"/>
    <property type="match status" value="1"/>
</dbReference>
<dbReference type="NCBIfam" id="NF003606">
    <property type="entry name" value="PRK05257.2-1"/>
    <property type="match status" value="1"/>
</dbReference>
<dbReference type="NCBIfam" id="NF003611">
    <property type="entry name" value="PRK05257.3-2"/>
    <property type="match status" value="1"/>
</dbReference>
<dbReference type="NCBIfam" id="NF009875">
    <property type="entry name" value="PRK13339.1"/>
    <property type="match status" value="1"/>
</dbReference>
<dbReference type="PANTHER" id="PTHR43104">
    <property type="entry name" value="L-2-HYDROXYGLUTARATE DEHYDROGENASE, MITOCHONDRIAL"/>
    <property type="match status" value="1"/>
</dbReference>
<dbReference type="PANTHER" id="PTHR43104:SF2">
    <property type="entry name" value="L-2-HYDROXYGLUTARATE DEHYDROGENASE, MITOCHONDRIAL"/>
    <property type="match status" value="1"/>
</dbReference>
<dbReference type="Pfam" id="PF06039">
    <property type="entry name" value="Mqo"/>
    <property type="match status" value="1"/>
</dbReference>
<dbReference type="SUPFAM" id="SSF51905">
    <property type="entry name" value="FAD/NAD(P)-binding domain"/>
    <property type="match status" value="1"/>
</dbReference>